<comment type="function">
    <text evidence="1">Catalyzes the reversible conversion of 3-phosphohydroxypyruvate to phosphoserine and of 3-hydroxy-2-oxo-4-phosphonooxybutanoate to phosphohydroxythreonine.</text>
</comment>
<comment type="catalytic activity">
    <reaction evidence="1">
        <text>O-phospho-L-serine + 2-oxoglutarate = 3-phosphooxypyruvate + L-glutamate</text>
        <dbReference type="Rhea" id="RHEA:14329"/>
        <dbReference type="ChEBI" id="CHEBI:16810"/>
        <dbReference type="ChEBI" id="CHEBI:18110"/>
        <dbReference type="ChEBI" id="CHEBI:29985"/>
        <dbReference type="ChEBI" id="CHEBI:57524"/>
        <dbReference type="EC" id="2.6.1.52"/>
    </reaction>
</comment>
<comment type="catalytic activity">
    <reaction evidence="1">
        <text>4-(phosphooxy)-L-threonine + 2-oxoglutarate = (R)-3-hydroxy-2-oxo-4-phosphooxybutanoate + L-glutamate</text>
        <dbReference type="Rhea" id="RHEA:16573"/>
        <dbReference type="ChEBI" id="CHEBI:16810"/>
        <dbReference type="ChEBI" id="CHEBI:29985"/>
        <dbReference type="ChEBI" id="CHEBI:58452"/>
        <dbReference type="ChEBI" id="CHEBI:58538"/>
        <dbReference type="EC" id="2.6.1.52"/>
    </reaction>
</comment>
<comment type="cofactor">
    <cofactor evidence="1">
        <name>pyridoxal 5'-phosphate</name>
        <dbReference type="ChEBI" id="CHEBI:597326"/>
    </cofactor>
    <text evidence="1">Binds 1 pyridoxal phosphate per subunit.</text>
</comment>
<comment type="pathway">
    <text evidence="1">Amino-acid biosynthesis; L-serine biosynthesis; L-serine from 3-phospho-D-glycerate: step 2/3.</text>
</comment>
<comment type="pathway">
    <text evidence="1">Cofactor biosynthesis; pyridoxine 5'-phosphate biosynthesis; pyridoxine 5'-phosphate from D-erythrose 4-phosphate: step 3/5.</text>
</comment>
<comment type="subunit">
    <text evidence="1">Homodimer.</text>
</comment>
<comment type="subcellular location">
    <subcellularLocation>
        <location evidence="1">Cytoplasm</location>
    </subcellularLocation>
</comment>
<comment type="similarity">
    <text evidence="1">Belongs to the class-V pyridoxal-phosphate-dependent aminotransferase family. SerC subfamily.</text>
</comment>
<dbReference type="EC" id="2.6.1.52" evidence="1"/>
<dbReference type="EMBL" id="CP000958">
    <property type="protein sequence ID" value="ACA90178.1"/>
    <property type="molecule type" value="Genomic_DNA"/>
</dbReference>
<dbReference type="RefSeq" id="WP_006476577.1">
    <property type="nucleotide sequence ID" value="NC_010508.1"/>
</dbReference>
<dbReference type="SMR" id="B1JXR6"/>
<dbReference type="GeneID" id="83047794"/>
<dbReference type="KEGG" id="bcm:Bcenmc03_1001"/>
<dbReference type="HOGENOM" id="CLU_034866_0_2_4"/>
<dbReference type="UniPathway" id="UPA00135">
    <property type="reaction ID" value="UER00197"/>
</dbReference>
<dbReference type="UniPathway" id="UPA00244">
    <property type="reaction ID" value="UER00311"/>
</dbReference>
<dbReference type="Proteomes" id="UP000002169">
    <property type="component" value="Chromosome 1"/>
</dbReference>
<dbReference type="GO" id="GO:0005737">
    <property type="term" value="C:cytoplasm"/>
    <property type="evidence" value="ECO:0007669"/>
    <property type="project" value="UniProtKB-SubCell"/>
</dbReference>
<dbReference type="GO" id="GO:0004648">
    <property type="term" value="F:O-phospho-L-serine:2-oxoglutarate aminotransferase activity"/>
    <property type="evidence" value="ECO:0007669"/>
    <property type="project" value="UniProtKB-UniRule"/>
</dbReference>
<dbReference type="GO" id="GO:0030170">
    <property type="term" value="F:pyridoxal phosphate binding"/>
    <property type="evidence" value="ECO:0007669"/>
    <property type="project" value="UniProtKB-UniRule"/>
</dbReference>
<dbReference type="GO" id="GO:0006564">
    <property type="term" value="P:L-serine biosynthetic process"/>
    <property type="evidence" value="ECO:0007669"/>
    <property type="project" value="UniProtKB-UniRule"/>
</dbReference>
<dbReference type="GO" id="GO:0008615">
    <property type="term" value="P:pyridoxine biosynthetic process"/>
    <property type="evidence" value="ECO:0007669"/>
    <property type="project" value="UniProtKB-UniRule"/>
</dbReference>
<dbReference type="CDD" id="cd00611">
    <property type="entry name" value="PSAT_like"/>
    <property type="match status" value="1"/>
</dbReference>
<dbReference type="FunFam" id="3.40.640.10:FF:000010">
    <property type="entry name" value="Phosphoserine aminotransferase"/>
    <property type="match status" value="1"/>
</dbReference>
<dbReference type="FunFam" id="3.90.1150.10:FF:000006">
    <property type="entry name" value="Phosphoserine aminotransferase"/>
    <property type="match status" value="1"/>
</dbReference>
<dbReference type="Gene3D" id="3.90.1150.10">
    <property type="entry name" value="Aspartate Aminotransferase, domain 1"/>
    <property type="match status" value="1"/>
</dbReference>
<dbReference type="Gene3D" id="3.40.640.10">
    <property type="entry name" value="Type I PLP-dependent aspartate aminotransferase-like (Major domain)"/>
    <property type="match status" value="1"/>
</dbReference>
<dbReference type="HAMAP" id="MF_00160">
    <property type="entry name" value="SerC_aminotrans_5"/>
    <property type="match status" value="1"/>
</dbReference>
<dbReference type="InterPro" id="IPR000192">
    <property type="entry name" value="Aminotrans_V_dom"/>
</dbReference>
<dbReference type="InterPro" id="IPR020578">
    <property type="entry name" value="Aminotrans_V_PyrdxlP_BS"/>
</dbReference>
<dbReference type="InterPro" id="IPR022278">
    <property type="entry name" value="Pser_aminoTfrase"/>
</dbReference>
<dbReference type="InterPro" id="IPR015424">
    <property type="entry name" value="PyrdxlP-dep_Trfase"/>
</dbReference>
<dbReference type="InterPro" id="IPR015421">
    <property type="entry name" value="PyrdxlP-dep_Trfase_major"/>
</dbReference>
<dbReference type="InterPro" id="IPR015422">
    <property type="entry name" value="PyrdxlP-dep_Trfase_small"/>
</dbReference>
<dbReference type="NCBIfam" id="NF003764">
    <property type="entry name" value="PRK05355.1"/>
    <property type="match status" value="1"/>
</dbReference>
<dbReference type="NCBIfam" id="TIGR01364">
    <property type="entry name" value="serC_1"/>
    <property type="match status" value="1"/>
</dbReference>
<dbReference type="PANTHER" id="PTHR43247">
    <property type="entry name" value="PHOSPHOSERINE AMINOTRANSFERASE"/>
    <property type="match status" value="1"/>
</dbReference>
<dbReference type="PANTHER" id="PTHR43247:SF1">
    <property type="entry name" value="PHOSPHOSERINE AMINOTRANSFERASE"/>
    <property type="match status" value="1"/>
</dbReference>
<dbReference type="Pfam" id="PF00266">
    <property type="entry name" value="Aminotran_5"/>
    <property type="match status" value="1"/>
</dbReference>
<dbReference type="PIRSF" id="PIRSF000525">
    <property type="entry name" value="SerC"/>
    <property type="match status" value="1"/>
</dbReference>
<dbReference type="SUPFAM" id="SSF53383">
    <property type="entry name" value="PLP-dependent transferases"/>
    <property type="match status" value="1"/>
</dbReference>
<dbReference type="PROSITE" id="PS00595">
    <property type="entry name" value="AA_TRANSFER_CLASS_5"/>
    <property type="match status" value="1"/>
</dbReference>
<proteinExistence type="inferred from homology"/>
<protein>
    <recommendedName>
        <fullName evidence="1">Phosphoserine aminotransferase</fullName>
        <ecNumber evidence="1">2.6.1.52</ecNumber>
    </recommendedName>
    <alternativeName>
        <fullName evidence="1">Phosphohydroxythreonine aminotransferase</fullName>
        <shortName evidence="1">PSAT</shortName>
    </alternativeName>
</protein>
<organism>
    <name type="scientific">Burkholderia orbicola (strain MC0-3)</name>
    <dbReference type="NCBI Taxonomy" id="406425"/>
    <lineage>
        <taxon>Bacteria</taxon>
        <taxon>Pseudomonadati</taxon>
        <taxon>Pseudomonadota</taxon>
        <taxon>Betaproteobacteria</taxon>
        <taxon>Burkholderiales</taxon>
        <taxon>Burkholderiaceae</taxon>
        <taxon>Burkholderia</taxon>
        <taxon>Burkholderia cepacia complex</taxon>
        <taxon>Burkholderia orbicola</taxon>
    </lineage>
</organism>
<feature type="chain" id="PRO_1000097205" description="Phosphoserine aminotransferase">
    <location>
        <begin position="1"/>
        <end position="360"/>
    </location>
</feature>
<feature type="binding site" evidence="1">
    <location>
        <position position="41"/>
    </location>
    <ligand>
        <name>L-glutamate</name>
        <dbReference type="ChEBI" id="CHEBI:29985"/>
    </ligand>
</feature>
<feature type="binding site" evidence="1">
    <location>
        <position position="101"/>
    </location>
    <ligand>
        <name>pyridoxal 5'-phosphate</name>
        <dbReference type="ChEBI" id="CHEBI:597326"/>
    </ligand>
</feature>
<feature type="binding site" evidence="1">
    <location>
        <position position="152"/>
    </location>
    <ligand>
        <name>pyridoxal 5'-phosphate</name>
        <dbReference type="ChEBI" id="CHEBI:597326"/>
    </ligand>
</feature>
<feature type="binding site" evidence="1">
    <location>
        <position position="172"/>
    </location>
    <ligand>
        <name>pyridoxal 5'-phosphate</name>
        <dbReference type="ChEBI" id="CHEBI:597326"/>
    </ligand>
</feature>
<feature type="binding site" evidence="1">
    <location>
        <position position="195"/>
    </location>
    <ligand>
        <name>pyridoxal 5'-phosphate</name>
        <dbReference type="ChEBI" id="CHEBI:597326"/>
    </ligand>
</feature>
<feature type="binding site" evidence="1">
    <location>
        <begin position="237"/>
        <end position="238"/>
    </location>
    <ligand>
        <name>pyridoxal 5'-phosphate</name>
        <dbReference type="ChEBI" id="CHEBI:597326"/>
    </ligand>
</feature>
<feature type="modified residue" description="N6-(pyridoxal phosphate)lysine" evidence="1">
    <location>
        <position position="196"/>
    </location>
</feature>
<gene>
    <name evidence="1" type="primary">serC</name>
    <name type="ordered locus">Bcenmc03_1001</name>
</gene>
<evidence type="ECO:0000255" key="1">
    <source>
        <dbReference type="HAMAP-Rule" id="MF_00160"/>
    </source>
</evidence>
<sequence>MRVFNFSAGPAAMPEEVLRQAADEMLDWHGSGMSVMEMSHRGKEFMSIHEAALTDLRDLLGVPASHRILFLQGGGIAENAIVPMNLLGARKTADFVVTGSWSQKSFGEAKKFCTPHLAASGKTEAGFTRAPARAEWQLSDDPAYVHLCTNETIDGVETFEIPDLGDVPLVADVSSHILSRPMDVAKYGVLFGGAQKNIGMAGVTVVIVREDLLDRALSICPSAFEWKTVAANNSLYNTPPTYAIYIAGLVFQWLKRQGGLEAIEARNIEKSKLLYDTIDASSFYLNKVEPAARSRMNVPFFLADETRNEDFLAGAKARGLLQLKGHKSVGGMRASIYNAVPLEGVKALVEYMKDFEQRGA</sequence>
<name>SERC_BURO0</name>
<accession>B1JXR6</accession>
<reference key="1">
    <citation type="submission" date="2008-02" db="EMBL/GenBank/DDBJ databases">
        <title>Complete sequence of chromosome 1 of Burkholderia cenocepacia MC0-3.</title>
        <authorList>
            <person name="Copeland A."/>
            <person name="Lucas S."/>
            <person name="Lapidus A."/>
            <person name="Barry K."/>
            <person name="Bruce D."/>
            <person name="Goodwin L."/>
            <person name="Glavina del Rio T."/>
            <person name="Dalin E."/>
            <person name="Tice H."/>
            <person name="Pitluck S."/>
            <person name="Chain P."/>
            <person name="Malfatti S."/>
            <person name="Shin M."/>
            <person name="Vergez L."/>
            <person name="Schmutz J."/>
            <person name="Larimer F."/>
            <person name="Land M."/>
            <person name="Hauser L."/>
            <person name="Kyrpides N."/>
            <person name="Mikhailova N."/>
            <person name="Tiedje J."/>
            <person name="Richardson P."/>
        </authorList>
    </citation>
    <scope>NUCLEOTIDE SEQUENCE [LARGE SCALE GENOMIC DNA]</scope>
    <source>
        <strain>MC0-3</strain>
    </source>
</reference>
<keyword id="KW-0028">Amino-acid biosynthesis</keyword>
<keyword id="KW-0032">Aminotransferase</keyword>
<keyword id="KW-0963">Cytoplasm</keyword>
<keyword id="KW-0663">Pyridoxal phosphate</keyword>
<keyword id="KW-0664">Pyridoxine biosynthesis</keyword>
<keyword id="KW-0718">Serine biosynthesis</keyword>
<keyword id="KW-0808">Transferase</keyword>